<gene>
    <name evidence="1" type="primary">murE</name>
    <name type="ordered locus">STER_0387</name>
</gene>
<protein>
    <recommendedName>
        <fullName evidence="1">UDP-N-acetylmuramoyl-L-alanyl-D-glutamate--L-lysine ligase</fullName>
        <ecNumber evidence="1">6.3.2.7</ecNumber>
    </recommendedName>
    <alternativeName>
        <fullName evidence="1">L-lysine-adding enzyme</fullName>
    </alternativeName>
    <alternativeName>
        <fullName evidence="1">UDP-MurNAc-L-Ala-D-Glu:L-Lys ligase</fullName>
    </alternativeName>
    <alternativeName>
        <fullName evidence="1">UDP-MurNAc-tripeptide synthetase</fullName>
    </alternativeName>
    <alternativeName>
        <fullName evidence="1">UDP-N-acetylmuramyl-tripeptide synthetase</fullName>
    </alternativeName>
</protein>
<name>MURE_STRTD</name>
<evidence type="ECO:0000255" key="1">
    <source>
        <dbReference type="HAMAP-Rule" id="MF_00208"/>
    </source>
</evidence>
<organism>
    <name type="scientific">Streptococcus thermophilus (strain ATCC BAA-491 / LMD-9)</name>
    <dbReference type="NCBI Taxonomy" id="322159"/>
    <lineage>
        <taxon>Bacteria</taxon>
        <taxon>Bacillati</taxon>
        <taxon>Bacillota</taxon>
        <taxon>Bacilli</taxon>
        <taxon>Lactobacillales</taxon>
        <taxon>Streptococcaceae</taxon>
        <taxon>Streptococcus</taxon>
    </lineage>
</organism>
<keyword id="KW-0067">ATP-binding</keyword>
<keyword id="KW-0131">Cell cycle</keyword>
<keyword id="KW-0132">Cell division</keyword>
<keyword id="KW-0133">Cell shape</keyword>
<keyword id="KW-0961">Cell wall biogenesis/degradation</keyword>
<keyword id="KW-0963">Cytoplasm</keyword>
<keyword id="KW-0436">Ligase</keyword>
<keyword id="KW-0547">Nucleotide-binding</keyword>
<keyword id="KW-0573">Peptidoglycan synthesis</keyword>
<feature type="chain" id="PRO_1000012397" description="UDP-N-acetylmuramoyl-L-alanyl-D-glutamate--L-lysine ligase">
    <location>
        <begin position="1"/>
        <end position="481"/>
    </location>
</feature>
<feature type="short sequence motif" description="L-lysine recognition motif">
    <location>
        <begin position="404"/>
        <end position="407"/>
    </location>
</feature>
<feature type="binding site" evidence="1">
    <location>
        <position position="42"/>
    </location>
    <ligand>
        <name>UDP-N-acetyl-alpha-D-muramoyl-L-alanyl-D-glutamate</name>
        <dbReference type="ChEBI" id="CHEBI:83900"/>
    </ligand>
</feature>
<feature type="binding site" evidence="1">
    <location>
        <begin position="118"/>
        <end position="124"/>
    </location>
    <ligand>
        <name>ATP</name>
        <dbReference type="ChEBI" id="CHEBI:30616"/>
    </ligand>
</feature>
<feature type="binding site" evidence="1">
    <location>
        <position position="158"/>
    </location>
    <ligand>
        <name>UDP-N-acetyl-alpha-D-muramoyl-L-alanyl-D-glutamate</name>
        <dbReference type="ChEBI" id="CHEBI:83900"/>
    </ligand>
</feature>
<feature type="binding site" evidence="1">
    <location>
        <begin position="160"/>
        <end position="161"/>
    </location>
    <ligand>
        <name>UDP-N-acetyl-alpha-D-muramoyl-L-alanyl-D-glutamate</name>
        <dbReference type="ChEBI" id="CHEBI:83900"/>
    </ligand>
</feature>
<feature type="binding site" evidence="1">
    <location>
        <position position="187"/>
    </location>
    <ligand>
        <name>UDP-N-acetyl-alpha-D-muramoyl-L-alanyl-D-glutamate</name>
        <dbReference type="ChEBI" id="CHEBI:83900"/>
    </ligand>
</feature>
<feature type="binding site" evidence="1">
    <location>
        <position position="195"/>
    </location>
    <ligand>
        <name>UDP-N-acetyl-alpha-D-muramoyl-L-alanyl-D-glutamate</name>
        <dbReference type="ChEBI" id="CHEBI:83900"/>
    </ligand>
</feature>
<feature type="modified residue" description="N6-carboxylysine" evidence="1">
    <location>
        <position position="229"/>
    </location>
</feature>
<sequence>MITIEQVLEVLKKDHNFRDIINQEYYYYSWTGVTFDHLSYDSRDITPSTLFFAKGAGFKLEFLESAVQAGLGFYVAEKDYQVGIPAILVSDIKQAMSLVAQAFYQHPQDKLKLLAFTGTKGKTTASYFAFNILKQSHKPAMLSTMNTTLDGKTFFKSNLTTPESLDLFRMMAEAVSNGMTHLIMEVSSQAYLTKRVYGLTFDVGVFLNISPDHIGPIEHPTFEDYFYHKRLLLKNSQAVIVNSGMNHFDFVAEEVADKDHDFYGKDSENTVKHSSGFSFKAKGKLAGDYDIQLIGDFNQDNAMAAGLACLRLGASLEDIKKGIAQTSVPGRMEILTQANGAKVFVDYAHNGDSLDKLLQVVTDHQKGKISLILGAPGNKGESRRQDFGHVLNTYPEINVILSTDDPNKEDPLTICQEIASHINRKVRIIIDREEAIKTAMSETTGSSDALVIAGKGADAFQIVNGKRTDYAGDIEVAKKYL</sequence>
<dbReference type="EC" id="6.3.2.7" evidence="1"/>
<dbReference type="EMBL" id="CP000419">
    <property type="protein sequence ID" value="ABJ65687.1"/>
    <property type="molecule type" value="Genomic_DNA"/>
</dbReference>
<dbReference type="RefSeq" id="WP_011680759.1">
    <property type="nucleotide sequence ID" value="NC_008532.1"/>
</dbReference>
<dbReference type="SMR" id="Q03M85"/>
<dbReference type="KEGG" id="ste:STER_0387"/>
<dbReference type="HOGENOM" id="CLU_022291_4_2_9"/>
<dbReference type="UniPathway" id="UPA00219"/>
<dbReference type="GO" id="GO:0005737">
    <property type="term" value="C:cytoplasm"/>
    <property type="evidence" value="ECO:0007669"/>
    <property type="project" value="UniProtKB-SubCell"/>
</dbReference>
<dbReference type="GO" id="GO:0005524">
    <property type="term" value="F:ATP binding"/>
    <property type="evidence" value="ECO:0007669"/>
    <property type="project" value="UniProtKB-UniRule"/>
</dbReference>
<dbReference type="GO" id="GO:0000287">
    <property type="term" value="F:magnesium ion binding"/>
    <property type="evidence" value="ECO:0007669"/>
    <property type="project" value="UniProtKB-UniRule"/>
</dbReference>
<dbReference type="GO" id="GO:0047482">
    <property type="term" value="F:UDP-N-acetylmuramoyl-L-alanyl-D-glutamate-L-lysine ligase activity"/>
    <property type="evidence" value="ECO:0007669"/>
    <property type="project" value="UniProtKB-UniRule"/>
</dbReference>
<dbReference type="GO" id="GO:0051301">
    <property type="term" value="P:cell division"/>
    <property type="evidence" value="ECO:0007669"/>
    <property type="project" value="UniProtKB-KW"/>
</dbReference>
<dbReference type="GO" id="GO:0071555">
    <property type="term" value="P:cell wall organization"/>
    <property type="evidence" value="ECO:0007669"/>
    <property type="project" value="UniProtKB-KW"/>
</dbReference>
<dbReference type="GO" id="GO:0009252">
    <property type="term" value="P:peptidoglycan biosynthetic process"/>
    <property type="evidence" value="ECO:0007669"/>
    <property type="project" value="UniProtKB-UniRule"/>
</dbReference>
<dbReference type="GO" id="GO:0008360">
    <property type="term" value="P:regulation of cell shape"/>
    <property type="evidence" value="ECO:0007669"/>
    <property type="project" value="UniProtKB-KW"/>
</dbReference>
<dbReference type="Gene3D" id="3.90.190.20">
    <property type="entry name" value="Mur ligase, C-terminal domain"/>
    <property type="match status" value="1"/>
</dbReference>
<dbReference type="Gene3D" id="3.40.1190.10">
    <property type="entry name" value="Mur-like, catalytic domain"/>
    <property type="match status" value="1"/>
</dbReference>
<dbReference type="Gene3D" id="3.40.1390.10">
    <property type="entry name" value="MurE/MurF, N-terminal domain"/>
    <property type="match status" value="1"/>
</dbReference>
<dbReference type="HAMAP" id="MF_00208">
    <property type="entry name" value="MurE"/>
    <property type="match status" value="1"/>
</dbReference>
<dbReference type="InterPro" id="IPR036565">
    <property type="entry name" value="Mur-like_cat_sf"/>
</dbReference>
<dbReference type="InterPro" id="IPR004101">
    <property type="entry name" value="Mur_ligase_C"/>
</dbReference>
<dbReference type="InterPro" id="IPR036615">
    <property type="entry name" value="Mur_ligase_C_dom_sf"/>
</dbReference>
<dbReference type="InterPro" id="IPR013221">
    <property type="entry name" value="Mur_ligase_cen"/>
</dbReference>
<dbReference type="InterPro" id="IPR035911">
    <property type="entry name" value="MurE/MurF_N"/>
</dbReference>
<dbReference type="InterPro" id="IPR005761">
    <property type="entry name" value="UDP-N-AcMur-Glu-dNH2Pim_ligase"/>
</dbReference>
<dbReference type="NCBIfam" id="TIGR01085">
    <property type="entry name" value="murE"/>
    <property type="match status" value="1"/>
</dbReference>
<dbReference type="NCBIfam" id="NF010628">
    <property type="entry name" value="PRK14022.1"/>
    <property type="match status" value="1"/>
</dbReference>
<dbReference type="PANTHER" id="PTHR23135">
    <property type="entry name" value="MUR LIGASE FAMILY MEMBER"/>
    <property type="match status" value="1"/>
</dbReference>
<dbReference type="PANTHER" id="PTHR23135:SF4">
    <property type="entry name" value="UDP-N-ACETYLMURAMOYL-L-ALANYL-D-GLUTAMATE--2,6-DIAMINOPIMELATE LIGASE MURE HOMOLOG, CHLOROPLASTIC"/>
    <property type="match status" value="1"/>
</dbReference>
<dbReference type="Pfam" id="PF02875">
    <property type="entry name" value="Mur_ligase_C"/>
    <property type="match status" value="1"/>
</dbReference>
<dbReference type="Pfam" id="PF08245">
    <property type="entry name" value="Mur_ligase_M"/>
    <property type="match status" value="1"/>
</dbReference>
<dbReference type="SUPFAM" id="SSF53623">
    <property type="entry name" value="MurD-like peptide ligases, catalytic domain"/>
    <property type="match status" value="1"/>
</dbReference>
<dbReference type="SUPFAM" id="SSF53244">
    <property type="entry name" value="MurD-like peptide ligases, peptide-binding domain"/>
    <property type="match status" value="1"/>
</dbReference>
<dbReference type="SUPFAM" id="SSF63418">
    <property type="entry name" value="MurE/MurF N-terminal domain"/>
    <property type="match status" value="1"/>
</dbReference>
<comment type="function">
    <text evidence="1">Catalyzes the addition of L-lysine to the nucleotide precursor UDP-N-acetylmuramoyl-L-alanyl-D-glutamate (UMAG) in the biosynthesis of bacterial cell-wall peptidoglycan.</text>
</comment>
<comment type="catalytic activity">
    <reaction evidence="1">
        <text>UDP-N-acetyl-alpha-D-muramoyl-L-alanyl-D-glutamate + L-lysine + ATP = UDP-N-acetyl-alpha-D-muramoyl-L-alanyl-gamma-D-glutamyl-L-lysine + ADP + phosphate + H(+)</text>
        <dbReference type="Rhea" id="RHEA:17969"/>
        <dbReference type="ChEBI" id="CHEBI:15378"/>
        <dbReference type="ChEBI" id="CHEBI:30616"/>
        <dbReference type="ChEBI" id="CHEBI:32551"/>
        <dbReference type="ChEBI" id="CHEBI:43474"/>
        <dbReference type="ChEBI" id="CHEBI:83900"/>
        <dbReference type="ChEBI" id="CHEBI:83903"/>
        <dbReference type="ChEBI" id="CHEBI:456216"/>
        <dbReference type="EC" id="6.3.2.7"/>
    </reaction>
</comment>
<comment type="pathway">
    <text evidence="1">Cell wall biogenesis; peptidoglycan biosynthesis.</text>
</comment>
<comment type="subcellular location">
    <subcellularLocation>
        <location evidence="1">Cytoplasm</location>
    </subcellularLocation>
</comment>
<comment type="PTM">
    <text evidence="1">Carboxylation is probably crucial for Mg(2+) binding and, consequently, for the gamma-phosphate positioning of ATP.</text>
</comment>
<comment type="similarity">
    <text evidence="1">Belongs to the MurCDEF family. MurE subfamily.</text>
</comment>
<reference key="1">
    <citation type="journal article" date="2006" name="Proc. Natl. Acad. Sci. U.S.A.">
        <title>Comparative genomics of the lactic acid bacteria.</title>
        <authorList>
            <person name="Makarova K.S."/>
            <person name="Slesarev A."/>
            <person name="Wolf Y.I."/>
            <person name="Sorokin A."/>
            <person name="Mirkin B."/>
            <person name="Koonin E.V."/>
            <person name="Pavlov A."/>
            <person name="Pavlova N."/>
            <person name="Karamychev V."/>
            <person name="Polouchine N."/>
            <person name="Shakhova V."/>
            <person name="Grigoriev I."/>
            <person name="Lou Y."/>
            <person name="Rohksar D."/>
            <person name="Lucas S."/>
            <person name="Huang K."/>
            <person name="Goodstein D.M."/>
            <person name="Hawkins T."/>
            <person name="Plengvidhya V."/>
            <person name="Welker D."/>
            <person name="Hughes J."/>
            <person name="Goh Y."/>
            <person name="Benson A."/>
            <person name="Baldwin K."/>
            <person name="Lee J.-H."/>
            <person name="Diaz-Muniz I."/>
            <person name="Dosti B."/>
            <person name="Smeianov V."/>
            <person name="Wechter W."/>
            <person name="Barabote R."/>
            <person name="Lorca G."/>
            <person name="Altermann E."/>
            <person name="Barrangou R."/>
            <person name="Ganesan B."/>
            <person name="Xie Y."/>
            <person name="Rawsthorne H."/>
            <person name="Tamir D."/>
            <person name="Parker C."/>
            <person name="Breidt F."/>
            <person name="Broadbent J.R."/>
            <person name="Hutkins R."/>
            <person name="O'Sullivan D."/>
            <person name="Steele J."/>
            <person name="Unlu G."/>
            <person name="Saier M.H. Jr."/>
            <person name="Klaenhammer T."/>
            <person name="Richardson P."/>
            <person name="Kozyavkin S."/>
            <person name="Weimer B.C."/>
            <person name="Mills D.A."/>
        </authorList>
    </citation>
    <scope>NUCLEOTIDE SEQUENCE [LARGE SCALE GENOMIC DNA]</scope>
    <source>
        <strain>ATCC BAA-491 / LMD-9</strain>
    </source>
</reference>
<proteinExistence type="inferred from homology"/>
<accession>Q03M85</accession>